<gene>
    <name evidence="1" type="primary">cynS</name>
    <name type="ordered locus">Rpic_4911</name>
</gene>
<evidence type="ECO:0000255" key="1">
    <source>
        <dbReference type="HAMAP-Rule" id="MF_00535"/>
    </source>
</evidence>
<sequence>MQREEVTELIVLQKIRKQLSWAQLAEVIGQSKEWSTAAMLGQMTLTRAQAEAVGTALELPQEAIALLQVPPYKGSLPTAVPTDPLIYRFYELVSVYGTTFKALIHEEFGDGIMSAIDFNMDLTREPDPKGDRVRIVMSGKFLPYKTY</sequence>
<comment type="function">
    <text evidence="1">Catalyzes the reaction of cyanate with bicarbonate to produce ammonia and carbon dioxide.</text>
</comment>
<comment type="catalytic activity">
    <reaction evidence="1">
        <text>cyanate + hydrogencarbonate + 3 H(+) = NH4(+) + 2 CO2</text>
        <dbReference type="Rhea" id="RHEA:11120"/>
        <dbReference type="ChEBI" id="CHEBI:15378"/>
        <dbReference type="ChEBI" id="CHEBI:16526"/>
        <dbReference type="ChEBI" id="CHEBI:17544"/>
        <dbReference type="ChEBI" id="CHEBI:28938"/>
        <dbReference type="ChEBI" id="CHEBI:29195"/>
        <dbReference type="EC" id="4.2.1.104"/>
    </reaction>
</comment>
<comment type="similarity">
    <text evidence="1">Belongs to the cyanase family.</text>
</comment>
<name>CYNS_RALPJ</name>
<organism>
    <name type="scientific">Ralstonia pickettii (strain 12J)</name>
    <dbReference type="NCBI Taxonomy" id="402626"/>
    <lineage>
        <taxon>Bacteria</taxon>
        <taxon>Pseudomonadati</taxon>
        <taxon>Pseudomonadota</taxon>
        <taxon>Betaproteobacteria</taxon>
        <taxon>Burkholderiales</taxon>
        <taxon>Burkholderiaceae</taxon>
        <taxon>Ralstonia</taxon>
    </lineage>
</organism>
<protein>
    <recommendedName>
        <fullName evidence="1">Cyanate hydratase</fullName>
        <shortName evidence="1">Cyanase</shortName>
        <ecNumber evidence="1">4.2.1.104</ecNumber>
    </recommendedName>
    <alternativeName>
        <fullName evidence="1">Cyanate hydrolase</fullName>
    </alternativeName>
    <alternativeName>
        <fullName evidence="1">Cyanate lyase</fullName>
    </alternativeName>
</protein>
<accession>B2UK94</accession>
<proteinExistence type="inferred from homology"/>
<feature type="chain" id="PRO_1000128233" description="Cyanate hydratase">
    <location>
        <begin position="1"/>
        <end position="147"/>
    </location>
</feature>
<feature type="active site" evidence="1">
    <location>
        <position position="88"/>
    </location>
</feature>
<feature type="active site" evidence="1">
    <location>
        <position position="91"/>
    </location>
</feature>
<feature type="active site" evidence="1">
    <location>
        <position position="114"/>
    </location>
</feature>
<dbReference type="EC" id="4.2.1.104" evidence="1"/>
<dbReference type="EMBL" id="CP001069">
    <property type="protein sequence ID" value="ACD29995.1"/>
    <property type="molecule type" value="Genomic_DNA"/>
</dbReference>
<dbReference type="SMR" id="B2UK94"/>
<dbReference type="STRING" id="402626.Rpic_4911"/>
<dbReference type="KEGG" id="rpi:Rpic_4911"/>
<dbReference type="eggNOG" id="COG1513">
    <property type="taxonomic scope" value="Bacteria"/>
</dbReference>
<dbReference type="HOGENOM" id="CLU_103452_1_0_4"/>
<dbReference type="GO" id="GO:0008824">
    <property type="term" value="F:cyanate hydratase activity"/>
    <property type="evidence" value="ECO:0007669"/>
    <property type="project" value="UniProtKB-UniRule"/>
</dbReference>
<dbReference type="GO" id="GO:0003677">
    <property type="term" value="F:DNA binding"/>
    <property type="evidence" value="ECO:0007669"/>
    <property type="project" value="InterPro"/>
</dbReference>
<dbReference type="GO" id="GO:0009439">
    <property type="term" value="P:cyanate metabolic process"/>
    <property type="evidence" value="ECO:0007669"/>
    <property type="project" value="UniProtKB-UniRule"/>
</dbReference>
<dbReference type="CDD" id="cd00559">
    <property type="entry name" value="Cyanase_C"/>
    <property type="match status" value="1"/>
</dbReference>
<dbReference type="Gene3D" id="3.30.1160.10">
    <property type="entry name" value="Cyanate lyase, C-terminal domain"/>
    <property type="match status" value="1"/>
</dbReference>
<dbReference type="Gene3D" id="1.10.260.40">
    <property type="entry name" value="lambda repressor-like DNA-binding domains"/>
    <property type="match status" value="1"/>
</dbReference>
<dbReference type="HAMAP" id="MF_00535">
    <property type="entry name" value="Cyanate_hydrat"/>
    <property type="match status" value="1"/>
</dbReference>
<dbReference type="InterPro" id="IPR008076">
    <property type="entry name" value="Cyanase"/>
</dbReference>
<dbReference type="InterPro" id="IPR003712">
    <property type="entry name" value="Cyanate_lyase_C"/>
</dbReference>
<dbReference type="InterPro" id="IPR036581">
    <property type="entry name" value="Cyanate_lyase_C_sf"/>
</dbReference>
<dbReference type="InterPro" id="IPR048564">
    <property type="entry name" value="CYNS_N"/>
</dbReference>
<dbReference type="InterPro" id="IPR010982">
    <property type="entry name" value="Lambda_DNA-bd_dom_sf"/>
</dbReference>
<dbReference type="NCBIfam" id="TIGR00673">
    <property type="entry name" value="cynS"/>
    <property type="match status" value="1"/>
</dbReference>
<dbReference type="NCBIfam" id="NF002773">
    <property type="entry name" value="PRK02866.1"/>
    <property type="match status" value="1"/>
</dbReference>
<dbReference type="PANTHER" id="PTHR34186">
    <property type="entry name" value="CYANATE HYDRATASE"/>
    <property type="match status" value="1"/>
</dbReference>
<dbReference type="PANTHER" id="PTHR34186:SF2">
    <property type="entry name" value="CYANATE HYDRATASE"/>
    <property type="match status" value="1"/>
</dbReference>
<dbReference type="Pfam" id="PF02560">
    <property type="entry name" value="Cyanate_lyase"/>
    <property type="match status" value="1"/>
</dbReference>
<dbReference type="Pfam" id="PF21291">
    <property type="entry name" value="CYNS_N"/>
    <property type="match status" value="1"/>
</dbReference>
<dbReference type="PIRSF" id="PIRSF001263">
    <property type="entry name" value="Cyanate_hydratas"/>
    <property type="match status" value="1"/>
</dbReference>
<dbReference type="PRINTS" id="PR01693">
    <property type="entry name" value="CYANASE"/>
</dbReference>
<dbReference type="SMART" id="SM01116">
    <property type="entry name" value="Cyanate_lyase"/>
    <property type="match status" value="1"/>
</dbReference>
<dbReference type="SUPFAM" id="SSF55234">
    <property type="entry name" value="Cyanase C-terminal domain"/>
    <property type="match status" value="1"/>
</dbReference>
<dbReference type="SUPFAM" id="SSF47413">
    <property type="entry name" value="lambda repressor-like DNA-binding domains"/>
    <property type="match status" value="1"/>
</dbReference>
<keyword id="KW-0456">Lyase</keyword>
<reference key="1">
    <citation type="submission" date="2008-05" db="EMBL/GenBank/DDBJ databases">
        <title>Complete sequence of chromosome 2 of Ralstonia pickettii 12J.</title>
        <authorList>
            <person name="Lucas S."/>
            <person name="Copeland A."/>
            <person name="Lapidus A."/>
            <person name="Glavina del Rio T."/>
            <person name="Dalin E."/>
            <person name="Tice H."/>
            <person name="Bruce D."/>
            <person name="Goodwin L."/>
            <person name="Pitluck S."/>
            <person name="Meincke L."/>
            <person name="Brettin T."/>
            <person name="Detter J.C."/>
            <person name="Han C."/>
            <person name="Kuske C.R."/>
            <person name="Schmutz J."/>
            <person name="Larimer F."/>
            <person name="Land M."/>
            <person name="Hauser L."/>
            <person name="Kyrpides N."/>
            <person name="Mikhailova N."/>
            <person name="Marsh T."/>
            <person name="Richardson P."/>
        </authorList>
    </citation>
    <scope>NUCLEOTIDE SEQUENCE [LARGE SCALE GENOMIC DNA]</scope>
    <source>
        <strain>12J</strain>
    </source>
</reference>